<reference evidence="5" key="1">
    <citation type="journal article" date="2012" name="Syst. Biol.">
        <title>Peptidomics-based phylogeny and biogeography of Mantophasmatodea (Hexapoda).</title>
        <authorList>
            <person name="Predel R."/>
            <person name="Neupert S."/>
            <person name="Huetteroth W."/>
            <person name="Kahnt J."/>
            <person name="Waidelich D."/>
            <person name="Roth S."/>
        </authorList>
    </citation>
    <scope>PROTEIN SEQUENCE</scope>
    <scope>PYROGLUTAMATE FORMATION AT GLN-1</scope>
    <scope>AMIDATION AT ASN-11</scope>
    <source>
        <tissue evidence="3">Corpora cardiaca</tissue>
    </source>
</reference>
<comment type="function">
    <text evidence="1">Cardioactive peptide. Corazonin is probably involved in the physiological regulation of the heart beat (By similarity).</text>
</comment>
<comment type="subcellular location">
    <subcellularLocation>
        <location evidence="6">Secreted</location>
    </subcellularLocation>
</comment>
<comment type="similarity">
    <text evidence="2">Belongs to the corazonin family.</text>
</comment>
<feature type="peptide" id="PRO_0000421706" description="Corazonin" evidence="3">
    <location>
        <begin position="1"/>
        <end position="11"/>
    </location>
</feature>
<feature type="modified residue" description="Pyrrolidone carboxylic acid" evidence="3">
    <location>
        <position position="1"/>
    </location>
</feature>
<feature type="modified residue" description="Asparagine amide" evidence="3">
    <location>
        <position position="11"/>
    </location>
</feature>
<keyword id="KW-0027">Amidation</keyword>
<keyword id="KW-0903">Direct protein sequencing</keyword>
<keyword id="KW-0527">Neuropeptide</keyword>
<keyword id="KW-0873">Pyrrolidone carboxylic acid</keyword>
<keyword id="KW-0964">Secreted</keyword>
<proteinExistence type="evidence at protein level"/>
<dbReference type="GO" id="GO:0005576">
    <property type="term" value="C:extracellular region"/>
    <property type="evidence" value="ECO:0007669"/>
    <property type="project" value="UniProtKB-SubCell"/>
</dbReference>
<dbReference type="GO" id="GO:0007218">
    <property type="term" value="P:neuropeptide signaling pathway"/>
    <property type="evidence" value="ECO:0007669"/>
    <property type="project" value="UniProtKB-KW"/>
</dbReference>
<sequence length="11" mass="1368">QTFHYSQGWTN</sequence>
<protein>
    <recommendedName>
        <fullName evidence="4">Corazonin</fullName>
    </recommendedName>
</protein>
<organism>
    <name type="scientific">Lobatophasma redelinghuysense</name>
    <name type="common">Gladiator</name>
    <name type="synonym">Heel-walker</name>
    <dbReference type="NCBI Taxonomy" id="253128"/>
    <lineage>
        <taxon>Eukaryota</taxon>
        <taxon>Metazoa</taxon>
        <taxon>Ecdysozoa</taxon>
        <taxon>Arthropoda</taxon>
        <taxon>Hexapoda</taxon>
        <taxon>Insecta</taxon>
        <taxon>Pterygota</taxon>
        <taxon>Neoptera</taxon>
        <taxon>Polyneoptera</taxon>
        <taxon>Mantophasmatodea</taxon>
        <taxon>Austrophasmatidae</taxon>
        <taxon>Lobatophasma</taxon>
    </lineage>
</organism>
<name>CORZ_LOBRE</name>
<accession>B3A096</accession>
<evidence type="ECO:0000250" key="1">
    <source>
        <dbReference type="UniProtKB" id="Q26377"/>
    </source>
</evidence>
<evidence type="ECO:0000255" key="2"/>
<evidence type="ECO:0000269" key="3">
    <source>
    </source>
</evidence>
<evidence type="ECO:0000303" key="4">
    <source>
    </source>
</evidence>
<evidence type="ECO:0000305" key="5"/>
<evidence type="ECO:0000305" key="6">
    <source>
    </source>
</evidence>